<feature type="chain" id="PRO_0000075627" description="Ribitol-5-phosphate cytidylyltransferase">
    <location>
        <begin position="1"/>
        <end position="239"/>
    </location>
</feature>
<feature type="binding site" evidence="1">
    <location>
        <begin position="7"/>
        <end position="10"/>
    </location>
    <ligand>
        <name>CTP</name>
        <dbReference type="ChEBI" id="CHEBI:37563"/>
    </ligand>
</feature>
<feature type="binding site" evidence="1">
    <location>
        <begin position="80"/>
        <end position="86"/>
    </location>
    <ligand>
        <name>CTP</name>
        <dbReference type="ChEBI" id="CHEBI:37563"/>
    </ligand>
</feature>
<feature type="site" description="Transition state stabilizer" evidence="1">
    <location>
        <position position="14"/>
    </location>
</feature>
<feature type="site" description="Transition state stabilizer" evidence="1">
    <location>
        <position position="22"/>
    </location>
</feature>
<feature type="site" description="Positions ribitol 5-phosphate for the nucleophilic attack" evidence="1">
    <location>
        <position position="157"/>
    </location>
</feature>
<feature type="site" description="Positions ribitol 5-phosphate for the nucleophilic attack" evidence="1">
    <location>
        <position position="214"/>
    </location>
</feature>
<reference key="1">
    <citation type="journal article" date="2002" name="Mol. Microbiol.">
        <title>Genome sequence of Streptococcus agalactiae, a pathogen causing invasive neonatal disease.</title>
        <authorList>
            <person name="Glaser P."/>
            <person name="Rusniok C."/>
            <person name="Buchrieser C."/>
            <person name="Chevalier F."/>
            <person name="Frangeul L."/>
            <person name="Msadek T."/>
            <person name="Zouine M."/>
            <person name="Couve E."/>
            <person name="Lalioui L."/>
            <person name="Poyart C."/>
            <person name="Trieu-Cuot P."/>
            <person name="Kunst F."/>
        </authorList>
    </citation>
    <scope>NUCLEOTIDE SEQUENCE [LARGE SCALE GENOMIC DNA]</scope>
    <source>
        <strain>NEM316</strain>
    </source>
</reference>
<sequence length="239" mass="26356">MNIGVIFAGGVGRRMNTKGKPKQFLEVHGKPIIVHTIDIFQNTEAIDAVVVVCVSDWLDYMNNLVERFNLTKVKAVVAGGETGQMSIFKGLEAAEQLATDDAVVLIHDGVRPLINEEVINANIKSVKETGSAVTSVRAKETVVLVNDSSKISEVVDRTRSFIAKAPQSFYLSDILSVERDAISKGITDAIDSSTLMGMYNRELTIVEGPYENIKITTPDDFYMFKALYDARENEQIYGM</sequence>
<accession>Q8E4B4</accession>
<keyword id="KW-0961">Cell wall biogenesis/degradation</keyword>
<keyword id="KW-0548">Nucleotidyltransferase</keyword>
<keyword id="KW-0777">Teichoic acid biosynthesis</keyword>
<keyword id="KW-0808">Transferase</keyword>
<proteinExistence type="inferred from homology"/>
<gene>
    <name evidence="1" type="primary">tarI</name>
    <name type="ordered locus">gbs1487</name>
</gene>
<comment type="function">
    <text evidence="1">Catalyzes the transfer of the cytidylyl group of CTP to D-ribitol 5-phosphate.</text>
</comment>
<comment type="catalytic activity">
    <reaction evidence="1">
        <text>D-ribitol 5-phosphate + CTP + H(+) = CDP-L-ribitol + diphosphate</text>
        <dbReference type="Rhea" id="RHEA:12456"/>
        <dbReference type="ChEBI" id="CHEBI:15378"/>
        <dbReference type="ChEBI" id="CHEBI:33019"/>
        <dbReference type="ChEBI" id="CHEBI:37563"/>
        <dbReference type="ChEBI" id="CHEBI:57608"/>
        <dbReference type="ChEBI" id="CHEBI:57695"/>
        <dbReference type="EC" id="2.7.7.40"/>
    </reaction>
</comment>
<comment type="pathway">
    <text evidence="1">Cell wall biogenesis; poly(ribitol phosphate) teichoic acid biosynthesis.</text>
</comment>
<comment type="similarity">
    <text evidence="1">Belongs to the IspD/TarI cytidylyltransferase family. TarI subfamily.</text>
</comment>
<name>TARI_STRA3</name>
<evidence type="ECO:0000255" key="1">
    <source>
        <dbReference type="HAMAP-Rule" id="MF_02068"/>
    </source>
</evidence>
<protein>
    <recommendedName>
        <fullName evidence="1">Ribitol-5-phosphate cytidylyltransferase</fullName>
        <ecNumber evidence="1">2.7.7.40</ecNumber>
    </recommendedName>
</protein>
<organism>
    <name type="scientific">Streptococcus agalactiae serotype III (strain NEM316)</name>
    <dbReference type="NCBI Taxonomy" id="211110"/>
    <lineage>
        <taxon>Bacteria</taxon>
        <taxon>Bacillati</taxon>
        <taxon>Bacillota</taxon>
        <taxon>Bacilli</taxon>
        <taxon>Lactobacillales</taxon>
        <taxon>Streptococcaceae</taxon>
        <taxon>Streptococcus</taxon>
    </lineage>
</organism>
<dbReference type="EC" id="2.7.7.40" evidence="1"/>
<dbReference type="EMBL" id="AL766851">
    <property type="protein sequence ID" value="CAD47146.1"/>
    <property type="molecule type" value="Genomic_DNA"/>
</dbReference>
<dbReference type="SMR" id="Q8E4B4"/>
<dbReference type="KEGG" id="san:gbs1487"/>
<dbReference type="eggNOG" id="COG1211">
    <property type="taxonomic scope" value="Bacteria"/>
</dbReference>
<dbReference type="HOGENOM" id="CLU_061281_2_3_9"/>
<dbReference type="UniPathway" id="UPA00790"/>
<dbReference type="Proteomes" id="UP000000823">
    <property type="component" value="Chromosome"/>
</dbReference>
<dbReference type="GO" id="GO:0005829">
    <property type="term" value="C:cytosol"/>
    <property type="evidence" value="ECO:0007669"/>
    <property type="project" value="TreeGrafter"/>
</dbReference>
<dbReference type="GO" id="GO:0047349">
    <property type="term" value="F:D-ribitol-5-phosphate cytidylyltransferase activity"/>
    <property type="evidence" value="ECO:0007669"/>
    <property type="project" value="UniProtKB-UniRule"/>
</dbReference>
<dbReference type="GO" id="GO:0071555">
    <property type="term" value="P:cell wall organization"/>
    <property type="evidence" value="ECO:0007669"/>
    <property type="project" value="UniProtKB-KW"/>
</dbReference>
<dbReference type="GO" id="GO:0008299">
    <property type="term" value="P:isoprenoid biosynthetic process"/>
    <property type="evidence" value="ECO:0007669"/>
    <property type="project" value="InterPro"/>
</dbReference>
<dbReference type="GO" id="GO:1902012">
    <property type="term" value="P:poly(ribitol phosphate) teichoic acid biosynthetic process"/>
    <property type="evidence" value="ECO:0007669"/>
    <property type="project" value="UniProtKB-UniRule"/>
</dbReference>
<dbReference type="CDD" id="cd02516">
    <property type="entry name" value="CDP-ME_synthetase"/>
    <property type="match status" value="1"/>
</dbReference>
<dbReference type="FunFam" id="3.90.550.10:FF:000003">
    <property type="entry name" value="2-C-methyl-D-erythritol 4-phosphate cytidylyltransferase"/>
    <property type="match status" value="1"/>
</dbReference>
<dbReference type="Gene3D" id="3.90.550.10">
    <property type="entry name" value="Spore Coat Polysaccharide Biosynthesis Protein SpsA, Chain A"/>
    <property type="match status" value="1"/>
</dbReference>
<dbReference type="HAMAP" id="MF_02068">
    <property type="entry name" value="TarI"/>
    <property type="match status" value="1"/>
</dbReference>
<dbReference type="InterPro" id="IPR034683">
    <property type="entry name" value="IspD/TarI"/>
</dbReference>
<dbReference type="InterPro" id="IPR018294">
    <property type="entry name" value="ISPD_synthase_CS"/>
</dbReference>
<dbReference type="InterPro" id="IPR029044">
    <property type="entry name" value="Nucleotide-diphossugar_trans"/>
</dbReference>
<dbReference type="InterPro" id="IPR034709">
    <property type="entry name" value="TarI"/>
</dbReference>
<dbReference type="PANTHER" id="PTHR43015">
    <property type="entry name" value="D-RIBITOL-5-PHOSPHATE CYTIDYLYLTRANSFERASE"/>
    <property type="match status" value="1"/>
</dbReference>
<dbReference type="PANTHER" id="PTHR43015:SF1">
    <property type="entry name" value="D-RIBITOL-5-PHOSPHATE CYTIDYLYLTRANSFERASE"/>
    <property type="match status" value="1"/>
</dbReference>
<dbReference type="Pfam" id="PF01128">
    <property type="entry name" value="IspD"/>
    <property type="match status" value="1"/>
</dbReference>
<dbReference type="SUPFAM" id="SSF53448">
    <property type="entry name" value="Nucleotide-diphospho-sugar transferases"/>
    <property type="match status" value="1"/>
</dbReference>
<dbReference type="PROSITE" id="PS01295">
    <property type="entry name" value="ISPD"/>
    <property type="match status" value="1"/>
</dbReference>